<protein>
    <recommendedName>
        <fullName>Thioredoxin H2</fullName>
        <shortName>AtTrxh2</shortName>
    </recommendedName>
    <alternativeName>
        <fullName>Thioredoxin 2</fullName>
        <shortName>AtTRX2</shortName>
    </alternativeName>
</protein>
<gene>
    <name type="primary">TRX2</name>
    <name type="ordered locus">At5g39950</name>
    <name type="ORF">MYH19.14</name>
</gene>
<name>TRXH2_ARATH</name>
<feature type="chain" id="PRO_0000120047" description="Thioredoxin H2">
    <location>
        <begin position="1"/>
        <end position="133"/>
    </location>
</feature>
<feature type="domain" description="Thioredoxin" evidence="2">
    <location>
        <begin position="6"/>
        <end position="133"/>
    </location>
</feature>
<feature type="region of interest" description="Disordered" evidence="3">
    <location>
        <begin position="1"/>
        <end position="22"/>
    </location>
</feature>
<feature type="active site" description="Nucleophile" evidence="1">
    <location>
        <position position="59"/>
    </location>
</feature>
<feature type="active site" description="Nucleophile" evidence="1">
    <location>
        <position position="62"/>
    </location>
</feature>
<feature type="site" description="Deprotonates C-terminal active site Cys" evidence="1">
    <location>
        <position position="53"/>
    </location>
</feature>
<feature type="site" description="Contributes to redox potential value" evidence="1">
    <location>
        <position position="60"/>
    </location>
</feature>
<feature type="site" description="Contributes to redox potential value" evidence="1">
    <location>
        <position position="61"/>
    </location>
</feature>
<feature type="disulfide bond" description="Redox-active" evidence="2">
    <location>
        <begin position="59"/>
        <end position="62"/>
    </location>
</feature>
<feature type="sequence conflict" description="In Ref. 2; AAC49353." evidence="7" ref="2">
    <original>T</original>
    <variation>I</variation>
    <location>
        <position position="7"/>
    </location>
</feature>
<feature type="sequence conflict" description="In Ref. 2; AAC49353." evidence="7" ref="2">
    <original>S</original>
    <variation>SS</variation>
    <location>
        <position position="22"/>
    </location>
</feature>
<feature type="sequence conflict" description="In Ref. 2; AAC49353." evidence="7" ref="2">
    <original>K</original>
    <variation>Q</variation>
    <location>
        <position position="127"/>
    </location>
</feature>
<evidence type="ECO:0000250" key="1"/>
<evidence type="ECO:0000255" key="2">
    <source>
        <dbReference type="PROSITE-ProRule" id="PRU00691"/>
    </source>
</evidence>
<evidence type="ECO:0000256" key="3">
    <source>
        <dbReference type="SAM" id="MobiDB-lite"/>
    </source>
</evidence>
<evidence type="ECO:0000269" key="4">
    <source>
    </source>
</evidence>
<evidence type="ECO:0000269" key="5">
    <source>
    </source>
</evidence>
<evidence type="ECO:0000269" key="6">
    <source>
    </source>
</evidence>
<evidence type="ECO:0000305" key="7"/>
<sequence length="133" mass="14676">MGGALSTVFGSGEDATAAGTESEPSRVLKFSSSARWQLHFNEIKESNKLLVVDFSASWCGPCRMIEPAIHAMADKFNDVDFVKLDVDELPDVAKEFNVTAMPTFVLVKRGKEIERIIGAKKDELEKKVSKLRA</sequence>
<comment type="function">
    <text evidence="4">Thiol-disulfide oxidoreductase probably involved in the redox regulation of a number of cytosolic enzymes. Possesses insulin disulfide bonds reducing activity.</text>
</comment>
<comment type="subunit">
    <text evidence="6">Interacts with MDH1.</text>
</comment>
<comment type="interaction">
    <interactant intactId="EBI-727983">
        <id>Q38879</id>
    </interactant>
    <interactant intactId="EBI-25512418">
        <id>Q3E9D5</id>
        <label>SAMDC4</label>
    </interactant>
    <organismsDiffer>false</organismsDiffer>
    <experiments>3</experiments>
</comment>
<comment type="subcellular location">
    <subcellularLocation>
        <location evidence="5">Cytoplasm</location>
    </subcellularLocation>
    <subcellularLocation>
        <location evidence="5">Mitochondrion</location>
    </subcellularLocation>
</comment>
<comment type="similarity">
    <text evidence="7">Belongs to the thioredoxin family. Plant H-type subfamily.</text>
</comment>
<accession>Q38879</accession>
<accession>Q39240</accession>
<reference key="1">
    <citation type="journal article" date="1995" name="Proc. Natl. Acad. Sci. U.S.A.">
        <title>Evidence for five divergent thioredoxin h sequences in Arabidopsis thaliana.</title>
        <authorList>
            <person name="Rivera-Madrid R."/>
            <person name="Mestres D."/>
            <person name="Marinho P."/>
            <person name="Jacquot J.-P."/>
            <person name="Decottignies P."/>
            <person name="Miginiac-Maslow M."/>
            <person name="Meyer Y."/>
        </authorList>
    </citation>
    <scope>NUCLEOTIDE SEQUENCE [MRNA]</scope>
    <source>
        <strain>cv. Columbia</strain>
        <tissue>Callus</tissue>
    </source>
</reference>
<reference key="2">
    <citation type="journal article" date="1996" name="J. Mol. Evol.">
        <title>Intron position as an evolutionary marker of thioredoxins and thioredoxin domains.</title>
        <authorList>
            <person name="Sahrawy M."/>
            <person name="Hecht V."/>
            <person name="Lopez Jaramillo J."/>
            <person name="Chueca A."/>
            <person name="Chartier Y."/>
            <person name="Meyer Y."/>
        </authorList>
    </citation>
    <scope>NUCLEOTIDE SEQUENCE [GENOMIC DNA]</scope>
    <source>
        <strain>cv. Landsberg erecta</strain>
    </source>
</reference>
<reference key="3">
    <citation type="journal article" date="1998" name="DNA Res.">
        <title>Structural analysis of Arabidopsis thaliana chromosome 5. IV. Sequence features of the regions of 1,456,315 bp covered by nineteen physically assigned P1 and TAC clones.</title>
        <authorList>
            <person name="Sato S."/>
            <person name="Kaneko T."/>
            <person name="Kotani H."/>
            <person name="Nakamura Y."/>
            <person name="Asamizu E."/>
            <person name="Miyajima N."/>
            <person name="Tabata S."/>
        </authorList>
    </citation>
    <scope>NUCLEOTIDE SEQUENCE [LARGE SCALE GENOMIC DNA]</scope>
    <source>
        <strain>cv. Columbia</strain>
    </source>
</reference>
<reference key="4">
    <citation type="journal article" date="2017" name="Plant J.">
        <title>Araport11: a complete reannotation of the Arabidopsis thaliana reference genome.</title>
        <authorList>
            <person name="Cheng C.Y."/>
            <person name="Krishnakumar V."/>
            <person name="Chan A.P."/>
            <person name="Thibaud-Nissen F."/>
            <person name="Schobel S."/>
            <person name="Town C.D."/>
        </authorList>
    </citation>
    <scope>GENOME REANNOTATION</scope>
    <source>
        <strain>cv. Columbia</strain>
    </source>
</reference>
<reference key="5">
    <citation type="journal article" date="2003" name="Science">
        <title>Empirical analysis of transcriptional activity in the Arabidopsis genome.</title>
        <authorList>
            <person name="Yamada K."/>
            <person name="Lim J."/>
            <person name="Dale J.M."/>
            <person name="Chen H."/>
            <person name="Shinn P."/>
            <person name="Palm C.J."/>
            <person name="Southwick A.M."/>
            <person name="Wu H.C."/>
            <person name="Kim C.J."/>
            <person name="Nguyen M."/>
            <person name="Pham P.K."/>
            <person name="Cheuk R.F."/>
            <person name="Karlin-Newmann G."/>
            <person name="Liu S.X."/>
            <person name="Lam B."/>
            <person name="Sakano H."/>
            <person name="Wu T."/>
            <person name="Yu G."/>
            <person name="Miranda M."/>
            <person name="Quach H.L."/>
            <person name="Tripp M."/>
            <person name="Chang C.H."/>
            <person name="Lee J.M."/>
            <person name="Toriumi M.J."/>
            <person name="Chan M.M."/>
            <person name="Tang C.C."/>
            <person name="Onodera C.S."/>
            <person name="Deng J.M."/>
            <person name="Akiyama K."/>
            <person name="Ansari Y."/>
            <person name="Arakawa T."/>
            <person name="Banh J."/>
            <person name="Banno F."/>
            <person name="Bowser L."/>
            <person name="Brooks S.Y."/>
            <person name="Carninci P."/>
            <person name="Chao Q."/>
            <person name="Choy N."/>
            <person name="Enju A."/>
            <person name="Goldsmith A.D."/>
            <person name="Gurjal M."/>
            <person name="Hansen N.F."/>
            <person name="Hayashizaki Y."/>
            <person name="Johnson-Hopson C."/>
            <person name="Hsuan V.W."/>
            <person name="Iida K."/>
            <person name="Karnes M."/>
            <person name="Khan S."/>
            <person name="Koesema E."/>
            <person name="Ishida J."/>
            <person name="Jiang P.X."/>
            <person name="Jones T."/>
            <person name="Kawai J."/>
            <person name="Kamiya A."/>
            <person name="Meyers C."/>
            <person name="Nakajima M."/>
            <person name="Narusaka M."/>
            <person name="Seki M."/>
            <person name="Sakurai T."/>
            <person name="Satou M."/>
            <person name="Tamse R."/>
            <person name="Vaysberg M."/>
            <person name="Wallender E.K."/>
            <person name="Wong C."/>
            <person name="Yamamura Y."/>
            <person name="Yuan S."/>
            <person name="Shinozaki K."/>
            <person name="Davis R.W."/>
            <person name="Theologis A."/>
            <person name="Ecker J.R."/>
        </authorList>
    </citation>
    <scope>NUCLEOTIDE SEQUENCE [LARGE SCALE MRNA]</scope>
    <source>
        <strain>cv. Columbia</strain>
    </source>
</reference>
<reference key="6">
    <citation type="journal article" date="2004" name="Plant Cell Physiol.">
        <title>Target proteins of the cytosolic thioredoxins in Arabidopsis thaliana.</title>
        <authorList>
            <person name="Yamazaki D."/>
            <person name="Motohashi K."/>
            <person name="Kasama T."/>
            <person name="Hara Y."/>
            <person name="Hisabori T."/>
        </authorList>
    </citation>
    <scope>FUNCTION</scope>
</reference>
<reference key="7">
    <citation type="journal article" date="2009" name="Mol. Plant">
        <title>Comparative genomic study of the thioredoxin family in photosynthetic organisms with emphasis on Populus trichocarpa.</title>
        <authorList>
            <person name="Chibani K."/>
            <person name="Wingsle G."/>
            <person name="Jacquot J.P."/>
            <person name="Gelhaye E."/>
            <person name="Rouhier N."/>
        </authorList>
    </citation>
    <scope>GENE FAMILY</scope>
    <scope>NOMENCLATURE</scope>
</reference>
<reference key="8">
    <citation type="journal article" date="2010" name="Proc. Natl. Acad. Sci. U.S.A.">
        <title>A membrane-associated thioredoxin required for plant growth moves from cell to cell, suggestive of a role in intercellular communication.</title>
        <authorList>
            <person name="Meng L."/>
            <person name="Wong J.H."/>
            <person name="Feldman L.J."/>
            <person name="Lemaux P.G."/>
            <person name="Buchanan B.B."/>
        </authorList>
    </citation>
    <scope>SUBCELLULAR LOCATION</scope>
</reference>
<reference key="9">
    <citation type="journal article" date="2018" name="J. Exp. Bot.">
        <title>Self-protection of cytosolic malate dehydrogenase against oxidative stress in Arabidopsis.</title>
        <authorList>
            <person name="Huang J."/>
            <person name="Niazi A.K."/>
            <person name="Young D."/>
            <person name="Rosado L.A."/>
            <person name="Vertommen D."/>
            <person name="Bodra N."/>
            <person name="Abdelgawwad M.R."/>
            <person name="Vignols F."/>
            <person name="Wei B."/>
            <person name="Wahni K."/>
            <person name="Bashandy T."/>
            <person name="Bariat L."/>
            <person name="Van Breusegem F."/>
            <person name="Messens J."/>
            <person name="Reichheld J.P."/>
        </authorList>
    </citation>
    <scope>INTERACTION WITH MDH1</scope>
</reference>
<keyword id="KW-0963">Cytoplasm</keyword>
<keyword id="KW-1015">Disulfide bond</keyword>
<keyword id="KW-0249">Electron transport</keyword>
<keyword id="KW-0496">Mitochondrion</keyword>
<keyword id="KW-0676">Redox-active center</keyword>
<keyword id="KW-1185">Reference proteome</keyword>
<keyword id="KW-0813">Transport</keyword>
<organism>
    <name type="scientific">Arabidopsis thaliana</name>
    <name type="common">Mouse-ear cress</name>
    <dbReference type="NCBI Taxonomy" id="3702"/>
    <lineage>
        <taxon>Eukaryota</taxon>
        <taxon>Viridiplantae</taxon>
        <taxon>Streptophyta</taxon>
        <taxon>Embryophyta</taxon>
        <taxon>Tracheophyta</taxon>
        <taxon>Spermatophyta</taxon>
        <taxon>Magnoliopsida</taxon>
        <taxon>eudicotyledons</taxon>
        <taxon>Gunneridae</taxon>
        <taxon>Pentapetalae</taxon>
        <taxon>rosids</taxon>
        <taxon>malvids</taxon>
        <taxon>Brassicales</taxon>
        <taxon>Brassicaceae</taxon>
        <taxon>Camelineae</taxon>
        <taxon>Arabidopsis</taxon>
    </lineage>
</organism>
<proteinExistence type="evidence at protein level"/>
<dbReference type="EMBL" id="Z35475">
    <property type="protein sequence ID" value="CAA84612.1"/>
    <property type="molecule type" value="mRNA"/>
</dbReference>
<dbReference type="EMBL" id="U35826">
    <property type="protein sequence ID" value="AAC49353.1"/>
    <property type="molecule type" value="Genomic_DNA"/>
</dbReference>
<dbReference type="EMBL" id="AB010077">
    <property type="protein sequence ID" value="BAB10219.1"/>
    <property type="molecule type" value="Genomic_DNA"/>
</dbReference>
<dbReference type="EMBL" id="CP002688">
    <property type="protein sequence ID" value="AED94495.1"/>
    <property type="molecule type" value="Genomic_DNA"/>
</dbReference>
<dbReference type="EMBL" id="AY048235">
    <property type="protein sequence ID" value="AAK82498.1"/>
    <property type="molecule type" value="mRNA"/>
</dbReference>
<dbReference type="EMBL" id="AY113052">
    <property type="protein sequence ID" value="AAM47360.1"/>
    <property type="molecule type" value="mRNA"/>
</dbReference>
<dbReference type="PIR" id="S58123">
    <property type="entry name" value="S58123"/>
</dbReference>
<dbReference type="RefSeq" id="NP_198811.1">
    <property type="nucleotide sequence ID" value="NM_123358.4"/>
</dbReference>
<dbReference type="SMR" id="Q38879"/>
<dbReference type="BioGRID" id="19243">
    <property type="interactions" value="1"/>
</dbReference>
<dbReference type="FunCoup" id="Q38879">
    <property type="interactions" value="2484"/>
</dbReference>
<dbReference type="IntAct" id="Q38879">
    <property type="interactions" value="1"/>
</dbReference>
<dbReference type="STRING" id="3702.Q38879"/>
<dbReference type="PaxDb" id="3702-AT5G39950.1"/>
<dbReference type="ProteomicsDB" id="232421"/>
<dbReference type="EnsemblPlants" id="AT5G39950.1">
    <property type="protein sequence ID" value="AT5G39950.1"/>
    <property type="gene ID" value="AT5G39950"/>
</dbReference>
<dbReference type="GeneID" id="833992"/>
<dbReference type="Gramene" id="AT5G39950.1">
    <property type="protein sequence ID" value="AT5G39950.1"/>
    <property type="gene ID" value="AT5G39950"/>
</dbReference>
<dbReference type="KEGG" id="ath:AT5G39950"/>
<dbReference type="Araport" id="AT5G39950"/>
<dbReference type="TAIR" id="AT5G39950">
    <property type="gene designation" value="TRX2"/>
</dbReference>
<dbReference type="eggNOG" id="KOG0907">
    <property type="taxonomic scope" value="Eukaryota"/>
</dbReference>
<dbReference type="HOGENOM" id="CLU_090389_14_1_1"/>
<dbReference type="InParanoid" id="Q38879"/>
<dbReference type="OMA" id="HAMADKF"/>
<dbReference type="PhylomeDB" id="Q38879"/>
<dbReference type="BioCyc" id="ARA:AT5G39950-MONOMER"/>
<dbReference type="PRO" id="PR:Q38879"/>
<dbReference type="Proteomes" id="UP000006548">
    <property type="component" value="Chromosome 5"/>
</dbReference>
<dbReference type="ExpressionAtlas" id="Q38879">
    <property type="expression patterns" value="baseline and differential"/>
</dbReference>
<dbReference type="GO" id="GO:0005829">
    <property type="term" value="C:cytosol"/>
    <property type="evidence" value="ECO:0000314"/>
    <property type="project" value="UniProtKB"/>
</dbReference>
<dbReference type="GO" id="GO:0005739">
    <property type="term" value="C:mitochondrion"/>
    <property type="evidence" value="ECO:0000314"/>
    <property type="project" value="UniProtKB"/>
</dbReference>
<dbReference type="GO" id="GO:0016671">
    <property type="term" value="F:oxidoreductase activity, acting on a sulfur group of donors, disulfide as acceptor"/>
    <property type="evidence" value="ECO:0000314"/>
    <property type="project" value="TAIR"/>
</dbReference>
<dbReference type="GO" id="GO:0016712">
    <property type="term" value="F:oxidoreductase activity, acting on paired donors, with incorporation or reduction of molecular oxygen, reduced flavin or flavoprotein as one donor, and incorporation of one atom of oxygen"/>
    <property type="evidence" value="ECO:0000314"/>
    <property type="project" value="TAIR"/>
</dbReference>
<dbReference type="GO" id="GO:0015035">
    <property type="term" value="F:protein-disulfide reductase activity"/>
    <property type="evidence" value="ECO:0007669"/>
    <property type="project" value="InterPro"/>
</dbReference>
<dbReference type="CDD" id="cd02947">
    <property type="entry name" value="TRX_family"/>
    <property type="match status" value="1"/>
</dbReference>
<dbReference type="FunFam" id="3.40.30.10:FF:000104">
    <property type="entry name" value="Thioredoxin"/>
    <property type="match status" value="1"/>
</dbReference>
<dbReference type="Gene3D" id="3.40.30.10">
    <property type="entry name" value="Glutaredoxin"/>
    <property type="match status" value="1"/>
</dbReference>
<dbReference type="InterPro" id="IPR005746">
    <property type="entry name" value="Thioredoxin"/>
</dbReference>
<dbReference type="InterPro" id="IPR036249">
    <property type="entry name" value="Thioredoxin-like_sf"/>
</dbReference>
<dbReference type="InterPro" id="IPR017937">
    <property type="entry name" value="Thioredoxin_CS"/>
</dbReference>
<dbReference type="InterPro" id="IPR013766">
    <property type="entry name" value="Thioredoxin_domain"/>
</dbReference>
<dbReference type="InterPro" id="IPR050620">
    <property type="entry name" value="Thioredoxin_H-type-like"/>
</dbReference>
<dbReference type="NCBIfam" id="TIGR01068">
    <property type="entry name" value="thioredoxin"/>
    <property type="match status" value="1"/>
</dbReference>
<dbReference type="PANTHER" id="PTHR10438">
    <property type="entry name" value="THIOREDOXIN"/>
    <property type="match status" value="1"/>
</dbReference>
<dbReference type="PANTHER" id="PTHR10438:SF413">
    <property type="entry name" value="THIOREDOXIN H2"/>
    <property type="match status" value="1"/>
</dbReference>
<dbReference type="Pfam" id="PF00085">
    <property type="entry name" value="Thioredoxin"/>
    <property type="match status" value="1"/>
</dbReference>
<dbReference type="PRINTS" id="PR00421">
    <property type="entry name" value="THIOREDOXIN"/>
</dbReference>
<dbReference type="SUPFAM" id="SSF52833">
    <property type="entry name" value="Thioredoxin-like"/>
    <property type="match status" value="1"/>
</dbReference>
<dbReference type="PROSITE" id="PS00194">
    <property type="entry name" value="THIOREDOXIN_1"/>
    <property type="match status" value="1"/>
</dbReference>
<dbReference type="PROSITE" id="PS51352">
    <property type="entry name" value="THIOREDOXIN_2"/>
    <property type="match status" value="1"/>
</dbReference>